<dbReference type="EMBL" id="CP000830">
    <property type="protein sequence ID" value="ABV92394.1"/>
    <property type="molecule type" value="Genomic_DNA"/>
</dbReference>
<dbReference type="RefSeq" id="WP_012177326.1">
    <property type="nucleotide sequence ID" value="NC_009952.1"/>
</dbReference>
<dbReference type="SMR" id="A8LQA8"/>
<dbReference type="STRING" id="398580.Dshi_0648"/>
<dbReference type="KEGG" id="dsh:Dshi_0648"/>
<dbReference type="eggNOG" id="COG0353">
    <property type="taxonomic scope" value="Bacteria"/>
</dbReference>
<dbReference type="HOGENOM" id="CLU_060739_1_1_5"/>
<dbReference type="OrthoDB" id="9802672at2"/>
<dbReference type="Proteomes" id="UP000006833">
    <property type="component" value="Chromosome"/>
</dbReference>
<dbReference type="GO" id="GO:0003677">
    <property type="term" value="F:DNA binding"/>
    <property type="evidence" value="ECO:0007669"/>
    <property type="project" value="UniProtKB-UniRule"/>
</dbReference>
<dbReference type="GO" id="GO:0008270">
    <property type="term" value="F:zinc ion binding"/>
    <property type="evidence" value="ECO:0007669"/>
    <property type="project" value="UniProtKB-KW"/>
</dbReference>
<dbReference type="GO" id="GO:0006310">
    <property type="term" value="P:DNA recombination"/>
    <property type="evidence" value="ECO:0007669"/>
    <property type="project" value="UniProtKB-UniRule"/>
</dbReference>
<dbReference type="GO" id="GO:0006281">
    <property type="term" value="P:DNA repair"/>
    <property type="evidence" value="ECO:0007669"/>
    <property type="project" value="UniProtKB-UniRule"/>
</dbReference>
<dbReference type="CDD" id="cd01025">
    <property type="entry name" value="TOPRIM_recR"/>
    <property type="match status" value="1"/>
</dbReference>
<dbReference type="Gene3D" id="3.40.1360.10">
    <property type="match status" value="1"/>
</dbReference>
<dbReference type="Gene3D" id="1.10.8.420">
    <property type="entry name" value="RecR Domain 1"/>
    <property type="match status" value="1"/>
</dbReference>
<dbReference type="HAMAP" id="MF_00017">
    <property type="entry name" value="RecR"/>
    <property type="match status" value="1"/>
</dbReference>
<dbReference type="InterPro" id="IPR000093">
    <property type="entry name" value="DNA_Rcmb_RecR"/>
</dbReference>
<dbReference type="InterPro" id="IPR023627">
    <property type="entry name" value="Rcmb_RecR"/>
</dbReference>
<dbReference type="InterPro" id="IPR006171">
    <property type="entry name" value="TOPRIM_dom"/>
</dbReference>
<dbReference type="InterPro" id="IPR034137">
    <property type="entry name" value="TOPRIM_RecR"/>
</dbReference>
<dbReference type="NCBIfam" id="TIGR00615">
    <property type="entry name" value="recR"/>
    <property type="match status" value="1"/>
</dbReference>
<dbReference type="PANTHER" id="PTHR30446">
    <property type="entry name" value="RECOMBINATION PROTEIN RECR"/>
    <property type="match status" value="1"/>
</dbReference>
<dbReference type="PANTHER" id="PTHR30446:SF0">
    <property type="entry name" value="RECOMBINATION PROTEIN RECR"/>
    <property type="match status" value="1"/>
</dbReference>
<dbReference type="Pfam" id="PF21175">
    <property type="entry name" value="RecR_C"/>
    <property type="match status" value="1"/>
</dbReference>
<dbReference type="Pfam" id="PF21176">
    <property type="entry name" value="RecR_HhH"/>
    <property type="match status" value="1"/>
</dbReference>
<dbReference type="Pfam" id="PF13662">
    <property type="entry name" value="Toprim_4"/>
    <property type="match status" value="1"/>
</dbReference>
<dbReference type="SMART" id="SM00493">
    <property type="entry name" value="TOPRIM"/>
    <property type="match status" value="1"/>
</dbReference>
<dbReference type="SUPFAM" id="SSF111304">
    <property type="entry name" value="Recombination protein RecR"/>
    <property type="match status" value="1"/>
</dbReference>
<dbReference type="PROSITE" id="PS50880">
    <property type="entry name" value="TOPRIM"/>
    <property type="match status" value="1"/>
</dbReference>
<proteinExistence type="inferred from homology"/>
<accession>A8LQA8</accession>
<organism>
    <name type="scientific">Dinoroseobacter shibae (strain DSM 16493 / NCIMB 14021 / DFL 12)</name>
    <dbReference type="NCBI Taxonomy" id="398580"/>
    <lineage>
        <taxon>Bacteria</taxon>
        <taxon>Pseudomonadati</taxon>
        <taxon>Pseudomonadota</taxon>
        <taxon>Alphaproteobacteria</taxon>
        <taxon>Rhodobacterales</taxon>
        <taxon>Roseobacteraceae</taxon>
        <taxon>Dinoroseobacter</taxon>
    </lineage>
</organism>
<gene>
    <name evidence="1" type="primary">recR</name>
    <name type="ordered locus">Dshi_0648</name>
</gene>
<evidence type="ECO:0000255" key="1">
    <source>
        <dbReference type="HAMAP-Rule" id="MF_00017"/>
    </source>
</evidence>
<feature type="chain" id="PRO_1000074118" description="Recombination protein RecR">
    <location>
        <begin position="1"/>
        <end position="199"/>
    </location>
</feature>
<feature type="domain" description="Toprim" evidence="1">
    <location>
        <begin position="81"/>
        <end position="176"/>
    </location>
</feature>
<feature type="zinc finger region" description="C4-type" evidence="1">
    <location>
        <begin position="58"/>
        <end position="73"/>
    </location>
</feature>
<sequence length="199" mass="20937">MSTAPKDIETLIDLMARLPGLGPRSARRAVLFLLGKNRRLLAPLGEAMTAVAQTARDCLNCGNIGTSDICDICTSEKRATGEICVVEDVADLWAMERAGVFKGRYHVLGGTLSALDAVGPEELRIPKLRDRAVSEGATEIILALGATVDGQTTAHYIAEALEGTGVAVTSLAQGVPIGGELDYLDDGTITAALRARKSF</sequence>
<protein>
    <recommendedName>
        <fullName evidence="1">Recombination protein RecR</fullName>
    </recommendedName>
</protein>
<reference key="1">
    <citation type="journal article" date="2010" name="ISME J.">
        <title>The complete genome sequence of the algal symbiont Dinoroseobacter shibae: a hitchhiker's guide to life in the sea.</title>
        <authorList>
            <person name="Wagner-Dobler I."/>
            <person name="Ballhausen B."/>
            <person name="Berger M."/>
            <person name="Brinkhoff T."/>
            <person name="Buchholz I."/>
            <person name="Bunk B."/>
            <person name="Cypionka H."/>
            <person name="Daniel R."/>
            <person name="Drepper T."/>
            <person name="Gerdts G."/>
            <person name="Hahnke S."/>
            <person name="Han C."/>
            <person name="Jahn D."/>
            <person name="Kalhoefer D."/>
            <person name="Kiss H."/>
            <person name="Klenk H.P."/>
            <person name="Kyrpides N."/>
            <person name="Liebl W."/>
            <person name="Liesegang H."/>
            <person name="Meincke L."/>
            <person name="Pati A."/>
            <person name="Petersen J."/>
            <person name="Piekarski T."/>
            <person name="Pommerenke C."/>
            <person name="Pradella S."/>
            <person name="Pukall R."/>
            <person name="Rabus R."/>
            <person name="Stackebrandt E."/>
            <person name="Thole S."/>
            <person name="Thompson L."/>
            <person name="Tielen P."/>
            <person name="Tomasch J."/>
            <person name="von Jan M."/>
            <person name="Wanphrut N."/>
            <person name="Wichels A."/>
            <person name="Zech H."/>
            <person name="Simon M."/>
        </authorList>
    </citation>
    <scope>NUCLEOTIDE SEQUENCE [LARGE SCALE GENOMIC DNA]</scope>
    <source>
        <strain>DSM 16493 / NCIMB 14021 / DFL 12</strain>
    </source>
</reference>
<name>RECR_DINSH</name>
<keyword id="KW-0227">DNA damage</keyword>
<keyword id="KW-0233">DNA recombination</keyword>
<keyword id="KW-0234">DNA repair</keyword>
<keyword id="KW-0479">Metal-binding</keyword>
<keyword id="KW-1185">Reference proteome</keyword>
<keyword id="KW-0862">Zinc</keyword>
<keyword id="KW-0863">Zinc-finger</keyword>
<comment type="function">
    <text evidence="1">May play a role in DNA repair. It seems to be involved in an RecBC-independent recombinational process of DNA repair. It may act with RecF and RecO.</text>
</comment>
<comment type="similarity">
    <text evidence="1">Belongs to the RecR family.</text>
</comment>